<proteinExistence type="inferred from homology"/>
<accession>Q8EU53</accession>
<gene>
    <name evidence="1" type="primary">tmk</name>
    <name type="ordered locus">OB0036</name>
</gene>
<keyword id="KW-0067">ATP-binding</keyword>
<keyword id="KW-0418">Kinase</keyword>
<keyword id="KW-0545">Nucleotide biosynthesis</keyword>
<keyword id="KW-0547">Nucleotide-binding</keyword>
<keyword id="KW-1185">Reference proteome</keyword>
<keyword id="KW-0808">Transferase</keyword>
<dbReference type="EC" id="2.7.4.9" evidence="1"/>
<dbReference type="EMBL" id="BA000028">
    <property type="protein sequence ID" value="BAC11992.1"/>
    <property type="molecule type" value="Genomic_DNA"/>
</dbReference>
<dbReference type="RefSeq" id="WP_011064438.1">
    <property type="nucleotide sequence ID" value="NC_004193.1"/>
</dbReference>
<dbReference type="SMR" id="Q8EU53"/>
<dbReference type="STRING" id="221109.gene:10732198"/>
<dbReference type="KEGG" id="oih:OB0036"/>
<dbReference type="eggNOG" id="COG0125">
    <property type="taxonomic scope" value="Bacteria"/>
</dbReference>
<dbReference type="HOGENOM" id="CLU_049131_0_2_9"/>
<dbReference type="OrthoDB" id="9774907at2"/>
<dbReference type="PhylomeDB" id="Q8EU53"/>
<dbReference type="Proteomes" id="UP000000822">
    <property type="component" value="Chromosome"/>
</dbReference>
<dbReference type="GO" id="GO:0005829">
    <property type="term" value="C:cytosol"/>
    <property type="evidence" value="ECO:0007669"/>
    <property type="project" value="TreeGrafter"/>
</dbReference>
<dbReference type="GO" id="GO:0005524">
    <property type="term" value="F:ATP binding"/>
    <property type="evidence" value="ECO:0007669"/>
    <property type="project" value="UniProtKB-UniRule"/>
</dbReference>
<dbReference type="GO" id="GO:0004798">
    <property type="term" value="F:dTMP kinase activity"/>
    <property type="evidence" value="ECO:0007669"/>
    <property type="project" value="UniProtKB-UniRule"/>
</dbReference>
<dbReference type="GO" id="GO:0006233">
    <property type="term" value="P:dTDP biosynthetic process"/>
    <property type="evidence" value="ECO:0007669"/>
    <property type="project" value="InterPro"/>
</dbReference>
<dbReference type="GO" id="GO:0006235">
    <property type="term" value="P:dTTP biosynthetic process"/>
    <property type="evidence" value="ECO:0007669"/>
    <property type="project" value="UniProtKB-UniRule"/>
</dbReference>
<dbReference type="GO" id="GO:0006227">
    <property type="term" value="P:dUDP biosynthetic process"/>
    <property type="evidence" value="ECO:0007669"/>
    <property type="project" value="TreeGrafter"/>
</dbReference>
<dbReference type="CDD" id="cd01672">
    <property type="entry name" value="TMPK"/>
    <property type="match status" value="1"/>
</dbReference>
<dbReference type="FunFam" id="3.40.50.300:FF:000225">
    <property type="entry name" value="Thymidylate kinase"/>
    <property type="match status" value="1"/>
</dbReference>
<dbReference type="Gene3D" id="3.40.50.300">
    <property type="entry name" value="P-loop containing nucleotide triphosphate hydrolases"/>
    <property type="match status" value="1"/>
</dbReference>
<dbReference type="HAMAP" id="MF_00165">
    <property type="entry name" value="Thymidylate_kinase"/>
    <property type="match status" value="1"/>
</dbReference>
<dbReference type="InterPro" id="IPR027417">
    <property type="entry name" value="P-loop_NTPase"/>
</dbReference>
<dbReference type="InterPro" id="IPR039430">
    <property type="entry name" value="Thymidylate_kin-like_dom"/>
</dbReference>
<dbReference type="InterPro" id="IPR018095">
    <property type="entry name" value="Thymidylate_kin_CS"/>
</dbReference>
<dbReference type="InterPro" id="IPR018094">
    <property type="entry name" value="Thymidylate_kinase"/>
</dbReference>
<dbReference type="NCBIfam" id="TIGR00041">
    <property type="entry name" value="DTMP_kinase"/>
    <property type="match status" value="1"/>
</dbReference>
<dbReference type="PANTHER" id="PTHR10344">
    <property type="entry name" value="THYMIDYLATE KINASE"/>
    <property type="match status" value="1"/>
</dbReference>
<dbReference type="PANTHER" id="PTHR10344:SF4">
    <property type="entry name" value="UMP-CMP KINASE 2, MITOCHONDRIAL"/>
    <property type="match status" value="1"/>
</dbReference>
<dbReference type="Pfam" id="PF02223">
    <property type="entry name" value="Thymidylate_kin"/>
    <property type="match status" value="1"/>
</dbReference>
<dbReference type="SUPFAM" id="SSF52540">
    <property type="entry name" value="P-loop containing nucleoside triphosphate hydrolases"/>
    <property type="match status" value="1"/>
</dbReference>
<dbReference type="PROSITE" id="PS01331">
    <property type="entry name" value="THYMIDYLATE_KINASE"/>
    <property type="match status" value="1"/>
</dbReference>
<reference key="1">
    <citation type="journal article" date="2002" name="Nucleic Acids Res.">
        <title>Genome sequence of Oceanobacillus iheyensis isolated from the Iheya Ridge and its unexpected adaptive capabilities to extreme environments.</title>
        <authorList>
            <person name="Takami H."/>
            <person name="Takaki Y."/>
            <person name="Uchiyama I."/>
        </authorList>
    </citation>
    <scope>NUCLEOTIDE SEQUENCE [LARGE SCALE GENOMIC DNA]</scope>
    <source>
        <strain>DSM 14371 / CIP 107618 / JCM 11309 / KCTC 3954 / HTE831</strain>
    </source>
</reference>
<protein>
    <recommendedName>
        <fullName evidence="1">Thymidylate kinase</fullName>
        <ecNumber evidence="1">2.7.4.9</ecNumber>
    </recommendedName>
    <alternativeName>
        <fullName evidence="1">dTMP kinase</fullName>
    </alternativeName>
</protein>
<name>KTHY_OCEIH</name>
<feature type="chain" id="PRO_0000155314" description="Thymidylate kinase">
    <location>
        <begin position="1"/>
        <end position="225"/>
    </location>
</feature>
<feature type="binding site" evidence="1">
    <location>
        <begin position="10"/>
        <end position="17"/>
    </location>
    <ligand>
        <name>ATP</name>
        <dbReference type="ChEBI" id="CHEBI:30616"/>
    </ligand>
</feature>
<organism>
    <name type="scientific">Oceanobacillus iheyensis (strain DSM 14371 / CIP 107618 / JCM 11309 / KCTC 3954 / HTE831)</name>
    <dbReference type="NCBI Taxonomy" id="221109"/>
    <lineage>
        <taxon>Bacteria</taxon>
        <taxon>Bacillati</taxon>
        <taxon>Bacillota</taxon>
        <taxon>Bacilli</taxon>
        <taxon>Bacillales</taxon>
        <taxon>Bacillaceae</taxon>
        <taxon>Oceanobacillus</taxon>
    </lineage>
</organism>
<sequence>MAGLFITFEGGEGAGKTTVIQHIFQKLIAQGIDVIQTREPGGIKISEKIRSIIHDPEHLEMEERTEALLYAAARRQHLVEKVFPALEQGKVVLCDRFVDSSLAYQGYARGLGIDEVYAINHFVIQDCMPDLTLFFDIEPKKGLERIAANKNRERNRLDLENMQFHEAVYEGYQKVIARFPERIKTIQAEQALEAVEQDTMEIISSFLNEKEKGGNNEINYYGDSR</sequence>
<comment type="function">
    <text evidence="1">Phosphorylation of dTMP to form dTDP in both de novo and salvage pathways of dTTP synthesis.</text>
</comment>
<comment type="catalytic activity">
    <reaction evidence="1">
        <text>dTMP + ATP = dTDP + ADP</text>
        <dbReference type="Rhea" id="RHEA:13517"/>
        <dbReference type="ChEBI" id="CHEBI:30616"/>
        <dbReference type="ChEBI" id="CHEBI:58369"/>
        <dbReference type="ChEBI" id="CHEBI:63528"/>
        <dbReference type="ChEBI" id="CHEBI:456216"/>
        <dbReference type="EC" id="2.7.4.9"/>
    </reaction>
</comment>
<comment type="similarity">
    <text evidence="1">Belongs to the thymidylate kinase family.</text>
</comment>
<evidence type="ECO:0000255" key="1">
    <source>
        <dbReference type="HAMAP-Rule" id="MF_00165"/>
    </source>
</evidence>